<sequence length="222" mass="23193">MSKVLVTGFGPYGVTPVNPAQLTAEELDGRTIAGATVISRIVPNTFFESIAAAQQAIAEIEPALVIMLGEYPGRSMITVERLAQNVNDCGRYGLADCAGRVLVGEPTDPAGPVAYHATVPVRAMVLAMRKAGVPADVSDAAGTFVCNHLMYGVLHHLAQKGLPVRAGWIHLPCLPSVAALDHNLGVPSMSVQTAVAGVTAGIEAAIRQSADIREPIPSRLQI</sequence>
<proteinExistence type="inferred from homology"/>
<dbReference type="EC" id="3.4.19.3" evidence="1"/>
<dbReference type="EMBL" id="AM408590">
    <property type="protein sequence ID" value="CAL70344.1"/>
    <property type="molecule type" value="Genomic_DNA"/>
</dbReference>
<dbReference type="RefSeq" id="WP_003401632.1">
    <property type="nucleotide sequence ID" value="NC_008769.1"/>
</dbReference>
<dbReference type="SMR" id="A1KFE2"/>
<dbReference type="MEROPS" id="C15.001"/>
<dbReference type="GeneID" id="45424287"/>
<dbReference type="KEGG" id="mbb:BCG_0359"/>
<dbReference type="HOGENOM" id="CLU_043960_4_3_11"/>
<dbReference type="Proteomes" id="UP000001472">
    <property type="component" value="Chromosome"/>
</dbReference>
<dbReference type="GO" id="GO:0005829">
    <property type="term" value="C:cytosol"/>
    <property type="evidence" value="ECO:0007669"/>
    <property type="project" value="InterPro"/>
</dbReference>
<dbReference type="GO" id="GO:0016920">
    <property type="term" value="F:pyroglutamyl-peptidase activity"/>
    <property type="evidence" value="ECO:0007669"/>
    <property type="project" value="UniProtKB-UniRule"/>
</dbReference>
<dbReference type="GO" id="GO:0006508">
    <property type="term" value="P:proteolysis"/>
    <property type="evidence" value="ECO:0007669"/>
    <property type="project" value="UniProtKB-KW"/>
</dbReference>
<dbReference type="CDD" id="cd00501">
    <property type="entry name" value="Peptidase_C15"/>
    <property type="match status" value="1"/>
</dbReference>
<dbReference type="Gene3D" id="3.40.630.20">
    <property type="entry name" value="Peptidase C15, pyroglutamyl peptidase I-like"/>
    <property type="match status" value="1"/>
</dbReference>
<dbReference type="HAMAP" id="MF_00417">
    <property type="entry name" value="Pyrrolid_peptidase"/>
    <property type="match status" value="1"/>
</dbReference>
<dbReference type="InterPro" id="IPR000816">
    <property type="entry name" value="Peptidase_C15"/>
</dbReference>
<dbReference type="InterPro" id="IPR016125">
    <property type="entry name" value="Peptidase_C15-like"/>
</dbReference>
<dbReference type="InterPro" id="IPR036440">
    <property type="entry name" value="Peptidase_C15-like_sf"/>
</dbReference>
<dbReference type="InterPro" id="IPR029762">
    <property type="entry name" value="PGP-I_bact-type"/>
</dbReference>
<dbReference type="InterPro" id="IPR033694">
    <property type="entry name" value="PGPEP1_Cys_AS"/>
</dbReference>
<dbReference type="InterPro" id="IPR033693">
    <property type="entry name" value="PGPEP1_Glu_AS"/>
</dbReference>
<dbReference type="NCBIfam" id="NF009674">
    <property type="entry name" value="PRK13195.1"/>
    <property type="match status" value="1"/>
</dbReference>
<dbReference type="NCBIfam" id="NF009676">
    <property type="entry name" value="PRK13197.1"/>
    <property type="match status" value="1"/>
</dbReference>
<dbReference type="NCBIfam" id="TIGR00504">
    <property type="entry name" value="pyro_pdase"/>
    <property type="match status" value="1"/>
</dbReference>
<dbReference type="PANTHER" id="PTHR23402">
    <property type="entry name" value="PROTEASE FAMILY C15 PYROGLUTAMYL-PEPTIDASE I-RELATED"/>
    <property type="match status" value="1"/>
</dbReference>
<dbReference type="PANTHER" id="PTHR23402:SF1">
    <property type="entry name" value="PYROGLUTAMYL-PEPTIDASE I"/>
    <property type="match status" value="1"/>
</dbReference>
<dbReference type="Pfam" id="PF01470">
    <property type="entry name" value="Peptidase_C15"/>
    <property type="match status" value="1"/>
</dbReference>
<dbReference type="PIRSF" id="PIRSF015592">
    <property type="entry name" value="Prld-crbxl_pptds"/>
    <property type="match status" value="1"/>
</dbReference>
<dbReference type="PRINTS" id="PR00706">
    <property type="entry name" value="PYROGLUPTASE"/>
</dbReference>
<dbReference type="SUPFAM" id="SSF53182">
    <property type="entry name" value="Pyrrolidone carboxyl peptidase (pyroglutamate aminopeptidase)"/>
    <property type="match status" value="1"/>
</dbReference>
<dbReference type="PROSITE" id="PS01334">
    <property type="entry name" value="PYRASE_CYS"/>
    <property type="match status" value="1"/>
</dbReference>
<dbReference type="PROSITE" id="PS01333">
    <property type="entry name" value="PYRASE_GLU"/>
    <property type="match status" value="1"/>
</dbReference>
<feature type="chain" id="PRO_1000050133" description="Pyrrolidone-carboxylate peptidase">
    <location>
        <begin position="1"/>
        <end position="222"/>
    </location>
</feature>
<feature type="active site" evidence="1">
    <location>
        <position position="80"/>
    </location>
</feature>
<feature type="active site" evidence="1">
    <location>
        <position position="146"/>
    </location>
</feature>
<feature type="active site" evidence="1">
    <location>
        <position position="170"/>
    </location>
</feature>
<name>PCP_MYCBP</name>
<comment type="function">
    <text evidence="1">Removes 5-oxoproline from various penultimate amino acid residues except L-proline.</text>
</comment>
<comment type="catalytic activity">
    <reaction evidence="1">
        <text>Release of an N-terminal pyroglutamyl group from a polypeptide, the second amino acid generally not being Pro.</text>
        <dbReference type="EC" id="3.4.19.3"/>
    </reaction>
</comment>
<comment type="subunit">
    <text evidence="1">Homotetramer.</text>
</comment>
<comment type="subcellular location">
    <subcellularLocation>
        <location evidence="1">Cytoplasm</location>
    </subcellularLocation>
</comment>
<comment type="similarity">
    <text evidence="1">Belongs to the peptidase C15 family.</text>
</comment>
<accession>A1KFE2</accession>
<evidence type="ECO:0000255" key="1">
    <source>
        <dbReference type="HAMAP-Rule" id="MF_00417"/>
    </source>
</evidence>
<protein>
    <recommendedName>
        <fullName evidence="1">Pyrrolidone-carboxylate peptidase</fullName>
        <ecNumber evidence="1">3.4.19.3</ecNumber>
    </recommendedName>
    <alternativeName>
        <fullName evidence="1">5-oxoprolyl-peptidase</fullName>
    </alternativeName>
    <alternativeName>
        <fullName evidence="1">Pyroglutamyl-peptidase I</fullName>
        <shortName evidence="1">PGP-I</shortName>
        <shortName evidence="1">Pyrase</shortName>
    </alternativeName>
</protein>
<organism>
    <name type="scientific">Mycobacterium bovis (strain BCG / Pasteur 1173P2)</name>
    <dbReference type="NCBI Taxonomy" id="410289"/>
    <lineage>
        <taxon>Bacteria</taxon>
        <taxon>Bacillati</taxon>
        <taxon>Actinomycetota</taxon>
        <taxon>Actinomycetes</taxon>
        <taxon>Mycobacteriales</taxon>
        <taxon>Mycobacteriaceae</taxon>
        <taxon>Mycobacterium</taxon>
        <taxon>Mycobacterium tuberculosis complex</taxon>
    </lineage>
</organism>
<reference key="1">
    <citation type="journal article" date="2007" name="Proc. Natl. Acad. Sci. U.S.A.">
        <title>Genome plasticity of BCG and impact on vaccine efficacy.</title>
        <authorList>
            <person name="Brosch R."/>
            <person name="Gordon S.V."/>
            <person name="Garnier T."/>
            <person name="Eiglmeier K."/>
            <person name="Frigui W."/>
            <person name="Valenti P."/>
            <person name="Dos Santos S."/>
            <person name="Duthoy S."/>
            <person name="Lacroix C."/>
            <person name="Garcia-Pelayo C."/>
            <person name="Inwald J.K."/>
            <person name="Golby P."/>
            <person name="Garcia J.N."/>
            <person name="Hewinson R.G."/>
            <person name="Behr M.A."/>
            <person name="Quail M.A."/>
            <person name="Churcher C."/>
            <person name="Barrell B.G."/>
            <person name="Parkhill J."/>
            <person name="Cole S.T."/>
        </authorList>
    </citation>
    <scope>NUCLEOTIDE SEQUENCE [LARGE SCALE GENOMIC DNA]</scope>
    <source>
        <strain>BCG / Pasteur 1173P2</strain>
    </source>
</reference>
<keyword id="KW-0963">Cytoplasm</keyword>
<keyword id="KW-0378">Hydrolase</keyword>
<keyword id="KW-0645">Protease</keyword>
<keyword id="KW-0788">Thiol protease</keyword>
<gene>
    <name evidence="1" type="primary">pcp</name>
    <name type="ordered locus">BCG_0359</name>
</gene>